<name>RLUD_BUCAP</name>
<keyword id="KW-0963">Cytoplasm</keyword>
<keyword id="KW-0413">Isomerase</keyword>
<keyword id="KW-0694">RNA-binding</keyword>
<keyword id="KW-0698">rRNA processing</keyword>
<gene>
    <name type="primary">rluD</name>
    <name type="ordered locus">BUsg_388</name>
</gene>
<sequence length="315" mass="36419">MEKKELSACVPFMGFSGKRLDQILSKLFMQYSRSCLKKWIIMNNVYINGKIENQPDKKILGGEKITIYSTDEKLPINLPQNIALNTIYEDSNILIINKPPGLVVHPGAGNQDGTILNALLYRYTNISSIPRCGIIHRLDKDTSGLMVIAKTIFSYNKLVTLLKKRKIIRKYQGIIKGNMISGGIVNYPIMRHPFKRICMTTDSLGKKSITHYKIINRFKFHTHVSFRLETGRTHQIRVHMLHIGYPLLGDPLYGGIDYGCNYFQENRNIYRKFNLFRQALHADYIEFIHPFTQKVMSWSASLPQDMKDILLYLKK</sequence>
<accession>Q8K9E9</accession>
<feature type="chain" id="PRO_0000162685" description="Ribosomal large subunit pseudouridine synthase D">
    <location>
        <begin position="1"/>
        <end position="315"/>
    </location>
</feature>
<feature type="domain" description="S4 RNA-binding" evidence="3">
    <location>
        <begin position="18"/>
        <end position="87"/>
    </location>
</feature>
<feature type="active site" evidence="1">
    <location>
        <position position="139"/>
    </location>
</feature>
<proteinExistence type="inferred from homology"/>
<protein>
    <recommendedName>
        <fullName evidence="2">Ribosomal large subunit pseudouridine synthase D</fullName>
        <ecNumber evidence="2">5.4.99.23</ecNumber>
    </recommendedName>
    <alternativeName>
        <fullName>23S rRNA pseudouridine(1911/1915/1917) synthase</fullName>
    </alternativeName>
    <alternativeName>
        <fullName>rRNA pseudouridylate synthase D</fullName>
    </alternativeName>
    <alternativeName>
        <fullName>rRNA-uridine isomerase D</fullName>
    </alternativeName>
</protein>
<evidence type="ECO:0000250" key="1"/>
<evidence type="ECO:0000250" key="2">
    <source>
        <dbReference type="UniProtKB" id="P33643"/>
    </source>
</evidence>
<evidence type="ECO:0000255" key="3">
    <source>
        <dbReference type="PROSITE-ProRule" id="PRU00182"/>
    </source>
</evidence>
<evidence type="ECO:0000305" key="4"/>
<dbReference type="EC" id="5.4.99.23" evidence="2"/>
<dbReference type="EMBL" id="AE013218">
    <property type="protein sequence ID" value="AAM67940.1"/>
    <property type="molecule type" value="Genomic_DNA"/>
</dbReference>
<dbReference type="SMR" id="Q8K9E9"/>
<dbReference type="STRING" id="198804.BUsg_388"/>
<dbReference type="KEGG" id="bas:BUsg_388"/>
<dbReference type="eggNOG" id="COG0564">
    <property type="taxonomic scope" value="Bacteria"/>
</dbReference>
<dbReference type="HOGENOM" id="CLU_016902_4_0_6"/>
<dbReference type="Proteomes" id="UP000000416">
    <property type="component" value="Chromosome"/>
</dbReference>
<dbReference type="GO" id="GO:0005737">
    <property type="term" value="C:cytoplasm"/>
    <property type="evidence" value="ECO:0007669"/>
    <property type="project" value="UniProtKB-SubCell"/>
</dbReference>
<dbReference type="GO" id="GO:0160140">
    <property type="term" value="F:23S rRNA pseudouridine(1911/1915/1917) synthase activity"/>
    <property type="evidence" value="ECO:0007669"/>
    <property type="project" value="UniProtKB-EC"/>
</dbReference>
<dbReference type="GO" id="GO:0003723">
    <property type="term" value="F:RNA binding"/>
    <property type="evidence" value="ECO:0007669"/>
    <property type="project" value="UniProtKB-KW"/>
</dbReference>
<dbReference type="GO" id="GO:0000455">
    <property type="term" value="P:enzyme-directed rRNA pseudouridine synthesis"/>
    <property type="evidence" value="ECO:0007669"/>
    <property type="project" value="UniProtKB-ARBA"/>
</dbReference>
<dbReference type="CDD" id="cd02869">
    <property type="entry name" value="PseudoU_synth_RluA_like"/>
    <property type="match status" value="1"/>
</dbReference>
<dbReference type="CDD" id="cd00165">
    <property type="entry name" value="S4"/>
    <property type="match status" value="1"/>
</dbReference>
<dbReference type="Gene3D" id="3.30.2350.10">
    <property type="entry name" value="Pseudouridine synthase"/>
    <property type="match status" value="1"/>
</dbReference>
<dbReference type="Gene3D" id="3.10.290.10">
    <property type="entry name" value="RNA-binding S4 domain"/>
    <property type="match status" value="1"/>
</dbReference>
<dbReference type="InterPro" id="IPR020103">
    <property type="entry name" value="PsdUridine_synth_cat_dom_sf"/>
</dbReference>
<dbReference type="InterPro" id="IPR006224">
    <property type="entry name" value="PsdUridine_synth_RluA-like_CS"/>
</dbReference>
<dbReference type="InterPro" id="IPR006225">
    <property type="entry name" value="PsdUridine_synth_RluC/D"/>
</dbReference>
<dbReference type="InterPro" id="IPR006145">
    <property type="entry name" value="PsdUridine_synth_RsuA/RluA"/>
</dbReference>
<dbReference type="InterPro" id="IPR050188">
    <property type="entry name" value="RluA_PseudoU_synthase"/>
</dbReference>
<dbReference type="InterPro" id="IPR002942">
    <property type="entry name" value="S4_RNA-bd"/>
</dbReference>
<dbReference type="InterPro" id="IPR036986">
    <property type="entry name" value="S4_RNA-bd_sf"/>
</dbReference>
<dbReference type="NCBIfam" id="NF008385">
    <property type="entry name" value="PRK11180.1"/>
    <property type="match status" value="1"/>
</dbReference>
<dbReference type="NCBIfam" id="TIGR00005">
    <property type="entry name" value="rluA_subfam"/>
    <property type="match status" value="1"/>
</dbReference>
<dbReference type="PANTHER" id="PTHR21600">
    <property type="entry name" value="MITOCHONDRIAL RNA PSEUDOURIDINE SYNTHASE"/>
    <property type="match status" value="1"/>
</dbReference>
<dbReference type="PANTHER" id="PTHR21600:SF44">
    <property type="entry name" value="RIBOSOMAL LARGE SUBUNIT PSEUDOURIDINE SYNTHASE D"/>
    <property type="match status" value="1"/>
</dbReference>
<dbReference type="Pfam" id="PF00849">
    <property type="entry name" value="PseudoU_synth_2"/>
    <property type="match status" value="1"/>
</dbReference>
<dbReference type="Pfam" id="PF01479">
    <property type="entry name" value="S4"/>
    <property type="match status" value="1"/>
</dbReference>
<dbReference type="SMART" id="SM00363">
    <property type="entry name" value="S4"/>
    <property type="match status" value="1"/>
</dbReference>
<dbReference type="SUPFAM" id="SSF55174">
    <property type="entry name" value="Alpha-L RNA-binding motif"/>
    <property type="match status" value="1"/>
</dbReference>
<dbReference type="SUPFAM" id="SSF55120">
    <property type="entry name" value="Pseudouridine synthase"/>
    <property type="match status" value="1"/>
</dbReference>
<dbReference type="PROSITE" id="PS01129">
    <property type="entry name" value="PSI_RLU"/>
    <property type="match status" value="1"/>
</dbReference>
<dbReference type="PROSITE" id="PS50889">
    <property type="entry name" value="S4"/>
    <property type="match status" value="1"/>
</dbReference>
<reference key="1">
    <citation type="journal article" date="2002" name="Science">
        <title>50 million years of genomic stasis in endosymbiotic bacteria.</title>
        <authorList>
            <person name="Tamas I."/>
            <person name="Klasson L."/>
            <person name="Canbaeck B."/>
            <person name="Naeslund A.K."/>
            <person name="Eriksson A.-S."/>
            <person name="Wernegreen J.J."/>
            <person name="Sandstroem J.P."/>
            <person name="Moran N.A."/>
            <person name="Andersson S.G.E."/>
        </authorList>
    </citation>
    <scope>NUCLEOTIDE SEQUENCE [LARGE SCALE GENOMIC DNA]</scope>
    <source>
        <strain>Sg</strain>
    </source>
</reference>
<organism>
    <name type="scientific">Buchnera aphidicola subsp. Schizaphis graminum (strain Sg)</name>
    <dbReference type="NCBI Taxonomy" id="198804"/>
    <lineage>
        <taxon>Bacteria</taxon>
        <taxon>Pseudomonadati</taxon>
        <taxon>Pseudomonadota</taxon>
        <taxon>Gammaproteobacteria</taxon>
        <taxon>Enterobacterales</taxon>
        <taxon>Erwiniaceae</taxon>
        <taxon>Buchnera</taxon>
    </lineage>
</organism>
<comment type="function">
    <text evidence="2">Responsible for synthesis of pseudouridine from uracil at positions 1911, 1915 and 1917 in 23S ribosomal RNA.</text>
</comment>
<comment type="catalytic activity">
    <reaction evidence="2">
        <text>uridine(1911/1915/1917) in 23S rRNA = pseudouridine(1911/1915/1917) in 23S rRNA</text>
        <dbReference type="Rhea" id="RHEA:42524"/>
        <dbReference type="Rhea" id="RHEA-COMP:10097"/>
        <dbReference type="Rhea" id="RHEA-COMP:10098"/>
        <dbReference type="ChEBI" id="CHEBI:65314"/>
        <dbReference type="ChEBI" id="CHEBI:65315"/>
        <dbReference type="EC" id="5.4.99.23"/>
    </reaction>
</comment>
<comment type="subcellular location">
    <subcellularLocation>
        <location evidence="2">Cytoplasm</location>
    </subcellularLocation>
    <text evidence="2">Associates with late stage pre-50S ribosomal subunits.</text>
</comment>
<comment type="similarity">
    <text evidence="4">Belongs to the pseudouridine synthase RluA family.</text>
</comment>